<reference key="1">
    <citation type="journal article" date="1993" name="Gene">
        <title>Cloning of the mouse cDNA encoding DNA topoisomerase I and chromosomal location of the gene.</title>
        <authorList>
            <person name="Koiwai O."/>
            <person name="Yasui Y."/>
            <person name="Sakai Y."/>
            <person name="Watanabe T."/>
            <person name="Ishii K."/>
            <person name="Yanagihara S."/>
            <person name="Andoh T."/>
        </authorList>
    </citation>
    <scope>NUCLEOTIDE SEQUENCE [MRNA]</scope>
    <scope>PARTIAL PROTEIN SEQUENCE</scope>
</reference>
<reference key="2">
    <citation type="submission" date="1993-07" db="EMBL/GenBank/DDBJ databases">
        <title>Cloning and characterization of mouse topoisomerase I cDNA.</title>
        <authorList>
            <person name="Hui C.-F."/>
            <person name="Lo C.K."/>
            <person name="Hwang J."/>
        </authorList>
    </citation>
    <scope>NUCLEOTIDE SEQUENCE [MRNA]</scope>
</reference>
<reference key="3">
    <citation type="journal article" date="2009" name="PLoS Biol.">
        <title>Lineage-specific biology revealed by a finished genome assembly of the mouse.</title>
        <authorList>
            <person name="Church D.M."/>
            <person name="Goodstadt L."/>
            <person name="Hillier L.W."/>
            <person name="Zody M.C."/>
            <person name="Goldstein S."/>
            <person name="She X."/>
            <person name="Bult C.J."/>
            <person name="Agarwala R."/>
            <person name="Cherry J.L."/>
            <person name="DiCuccio M."/>
            <person name="Hlavina W."/>
            <person name="Kapustin Y."/>
            <person name="Meric P."/>
            <person name="Maglott D."/>
            <person name="Birtle Z."/>
            <person name="Marques A.C."/>
            <person name="Graves T."/>
            <person name="Zhou S."/>
            <person name="Teague B."/>
            <person name="Potamousis K."/>
            <person name="Churas C."/>
            <person name="Place M."/>
            <person name="Herschleb J."/>
            <person name="Runnheim R."/>
            <person name="Forrest D."/>
            <person name="Amos-Landgraf J."/>
            <person name="Schwartz D.C."/>
            <person name="Cheng Z."/>
            <person name="Lindblad-Toh K."/>
            <person name="Eichler E.E."/>
            <person name="Ponting C.P."/>
        </authorList>
    </citation>
    <scope>NUCLEOTIDE SEQUENCE [LARGE SCALE GENOMIC DNA]</scope>
    <source>
        <strain>C57BL/6J</strain>
    </source>
</reference>
<reference key="4">
    <citation type="journal article" date="2010" name="Cell">
        <title>A tissue-specific atlas of mouse protein phosphorylation and expression.</title>
        <authorList>
            <person name="Huttlin E.L."/>
            <person name="Jedrychowski M.P."/>
            <person name="Elias J.E."/>
            <person name="Goswami T."/>
            <person name="Rad R."/>
            <person name="Beausoleil S.A."/>
            <person name="Villen J."/>
            <person name="Haas W."/>
            <person name="Sowa M.E."/>
            <person name="Gygi S.P."/>
        </authorList>
    </citation>
    <scope>IDENTIFICATION BY MASS SPECTROMETRY [LARGE SCALE ANALYSIS]</scope>
    <source>
        <tissue>Spleen</tissue>
    </source>
</reference>
<reference key="5">
    <citation type="journal article" date="2013" name="Mol. Cell">
        <title>SIRT5-mediated lysine desuccinylation impacts diverse metabolic pathways.</title>
        <authorList>
            <person name="Park J."/>
            <person name="Chen Y."/>
            <person name="Tishkoff D.X."/>
            <person name="Peng C."/>
            <person name="Tan M."/>
            <person name="Dai L."/>
            <person name="Xie Z."/>
            <person name="Zhang Y."/>
            <person name="Zwaans B.M."/>
            <person name="Skinner M.E."/>
            <person name="Lombard D.B."/>
            <person name="Zhao Y."/>
        </authorList>
    </citation>
    <scope>ACETYLATION [LARGE SCALE ANALYSIS] AT LYS-174</scope>
    <scope>IDENTIFICATION BY MASS SPECTROMETRY [LARGE SCALE ANALYSIS]</scope>
    <source>
        <tissue>Embryonic fibroblast</tissue>
    </source>
</reference>
<dbReference type="EC" id="5.6.2.1" evidence="4"/>
<dbReference type="EMBL" id="D10061">
    <property type="protein sequence ID" value="BAA00950.1"/>
    <property type="molecule type" value="mRNA"/>
</dbReference>
<dbReference type="EMBL" id="L20632">
    <property type="protein sequence ID" value="AAA40466.1"/>
    <property type="molecule type" value="mRNA"/>
</dbReference>
<dbReference type="EMBL" id="AL590414">
    <property type="protein sequence ID" value="CAM20297.1"/>
    <property type="molecule type" value="Genomic_DNA"/>
</dbReference>
<dbReference type="EMBL" id="AL591673">
    <property type="protein sequence ID" value="CAM20297.1"/>
    <property type="status" value="JOINED"/>
    <property type="molecule type" value="Genomic_DNA"/>
</dbReference>
<dbReference type="EMBL" id="AL591673">
    <property type="protein sequence ID" value="CAM25349.1"/>
    <property type="molecule type" value="Genomic_DNA"/>
</dbReference>
<dbReference type="EMBL" id="AL590414">
    <property type="protein sequence ID" value="CAM25349.1"/>
    <property type="status" value="JOINED"/>
    <property type="molecule type" value="Genomic_DNA"/>
</dbReference>
<dbReference type="CCDS" id="CCDS16995.1"/>
<dbReference type="PIR" id="JU0144">
    <property type="entry name" value="JU0144"/>
</dbReference>
<dbReference type="RefSeq" id="NP_033434.2">
    <property type="nucleotide sequence ID" value="NM_009408.3"/>
</dbReference>
<dbReference type="SMR" id="Q04750"/>
<dbReference type="BioGRID" id="204275">
    <property type="interactions" value="47"/>
</dbReference>
<dbReference type="CORUM" id="Q04750"/>
<dbReference type="FunCoup" id="Q04750">
    <property type="interactions" value="3777"/>
</dbReference>
<dbReference type="IntAct" id="Q04750">
    <property type="interactions" value="10"/>
</dbReference>
<dbReference type="MINT" id="Q04750"/>
<dbReference type="STRING" id="10090.ENSMUSP00000105094"/>
<dbReference type="BindingDB" id="Q04750"/>
<dbReference type="ChEMBL" id="CHEMBL2814"/>
<dbReference type="DrugCentral" id="Q04750"/>
<dbReference type="GlyGen" id="Q04750">
    <property type="glycosylation" value="2 sites, 1 N-linked glycan (1 site), 1 O-linked glycan (1 site)"/>
</dbReference>
<dbReference type="iPTMnet" id="Q04750"/>
<dbReference type="PhosphoSitePlus" id="Q04750"/>
<dbReference type="SwissPalm" id="Q04750"/>
<dbReference type="jPOST" id="Q04750"/>
<dbReference type="PaxDb" id="10090-ENSMUSP00000105094"/>
<dbReference type="PeptideAtlas" id="Q04750"/>
<dbReference type="ProteomicsDB" id="259154"/>
<dbReference type="Pumba" id="Q04750"/>
<dbReference type="Antibodypedia" id="3962">
    <property type="antibodies" value="449 antibodies from 44 providers"/>
</dbReference>
<dbReference type="DNASU" id="21969"/>
<dbReference type="Ensembl" id="ENSMUST00000109468.3">
    <property type="protein sequence ID" value="ENSMUSP00000105094.3"/>
    <property type="gene ID" value="ENSMUSG00000070544.7"/>
</dbReference>
<dbReference type="GeneID" id="21969"/>
<dbReference type="KEGG" id="mmu:21969"/>
<dbReference type="UCSC" id="uc008nqy.1">
    <property type="organism name" value="mouse"/>
</dbReference>
<dbReference type="AGR" id="MGI:98788"/>
<dbReference type="CTD" id="7150"/>
<dbReference type="MGI" id="MGI:98788">
    <property type="gene designation" value="Top1"/>
</dbReference>
<dbReference type="VEuPathDB" id="HostDB:ENSMUSG00000070544"/>
<dbReference type="eggNOG" id="KOG0981">
    <property type="taxonomic scope" value="Eukaryota"/>
</dbReference>
<dbReference type="GeneTree" id="ENSGT00940000155006"/>
<dbReference type="HOGENOM" id="CLU_009193_0_1_1"/>
<dbReference type="InParanoid" id="Q04750"/>
<dbReference type="OMA" id="HRWKEVK"/>
<dbReference type="OrthoDB" id="47179at2759"/>
<dbReference type="PhylomeDB" id="Q04750"/>
<dbReference type="TreeFam" id="TF105281"/>
<dbReference type="BRENDA" id="5.6.2.1">
    <property type="organism ID" value="3474"/>
</dbReference>
<dbReference type="Reactome" id="R-MMU-4615885">
    <property type="pathway name" value="SUMOylation of DNA replication proteins"/>
</dbReference>
<dbReference type="BioGRID-ORCS" id="21969">
    <property type="hits" value="23 hits in 78 CRISPR screens"/>
</dbReference>
<dbReference type="ChiTaRS" id="Top1">
    <property type="organism name" value="mouse"/>
</dbReference>
<dbReference type="PRO" id="PR:Q04750"/>
<dbReference type="Proteomes" id="UP000000589">
    <property type="component" value="Chromosome 2"/>
</dbReference>
<dbReference type="RNAct" id="Q04750">
    <property type="molecule type" value="protein"/>
</dbReference>
<dbReference type="Bgee" id="ENSMUSG00000070544">
    <property type="expression patterns" value="Expressed in ileal epithelium and 262 other cell types or tissues"/>
</dbReference>
<dbReference type="GO" id="GO:0005737">
    <property type="term" value="C:cytoplasm"/>
    <property type="evidence" value="ECO:0000314"/>
    <property type="project" value="MGI"/>
</dbReference>
<dbReference type="GO" id="GO:0001651">
    <property type="term" value="C:dense fibrillar component"/>
    <property type="evidence" value="ECO:0007669"/>
    <property type="project" value="Ensembl"/>
</dbReference>
<dbReference type="GO" id="GO:0001650">
    <property type="term" value="C:fibrillar center"/>
    <property type="evidence" value="ECO:0007669"/>
    <property type="project" value="Ensembl"/>
</dbReference>
<dbReference type="GO" id="GO:0001673">
    <property type="term" value="C:male germ cell nucleus"/>
    <property type="evidence" value="ECO:0000314"/>
    <property type="project" value="MGI"/>
</dbReference>
<dbReference type="GO" id="GO:0000228">
    <property type="term" value="C:nuclear chromosome"/>
    <property type="evidence" value="ECO:0007669"/>
    <property type="project" value="Ensembl"/>
</dbReference>
<dbReference type="GO" id="GO:0005654">
    <property type="term" value="C:nucleoplasm"/>
    <property type="evidence" value="ECO:0007669"/>
    <property type="project" value="UniProtKB-SubCell"/>
</dbReference>
<dbReference type="GO" id="GO:0005634">
    <property type="term" value="C:nucleus"/>
    <property type="evidence" value="ECO:0000314"/>
    <property type="project" value="MGI"/>
</dbReference>
<dbReference type="GO" id="GO:0000932">
    <property type="term" value="C:P-body"/>
    <property type="evidence" value="ECO:0007669"/>
    <property type="project" value="Ensembl"/>
</dbReference>
<dbReference type="GO" id="GO:0043204">
    <property type="term" value="C:perikaryon"/>
    <property type="evidence" value="ECO:0000314"/>
    <property type="project" value="MGI"/>
</dbReference>
<dbReference type="GO" id="GO:0032993">
    <property type="term" value="C:protein-DNA complex"/>
    <property type="evidence" value="ECO:0007669"/>
    <property type="project" value="Ensembl"/>
</dbReference>
<dbReference type="GO" id="GO:0005524">
    <property type="term" value="F:ATP binding"/>
    <property type="evidence" value="ECO:0007669"/>
    <property type="project" value="Ensembl"/>
</dbReference>
<dbReference type="GO" id="GO:0031490">
    <property type="term" value="F:chromatin DNA binding"/>
    <property type="evidence" value="ECO:0007669"/>
    <property type="project" value="Ensembl"/>
</dbReference>
<dbReference type="GO" id="GO:0003917">
    <property type="term" value="F:DNA topoisomerase type I (single strand cut, ATP-independent) activity"/>
    <property type="evidence" value="ECO:0000314"/>
    <property type="project" value="MGI"/>
</dbReference>
<dbReference type="GO" id="GO:0019904">
    <property type="term" value="F:protein domain specific binding"/>
    <property type="evidence" value="ECO:0007669"/>
    <property type="project" value="Ensembl"/>
</dbReference>
<dbReference type="GO" id="GO:0004674">
    <property type="term" value="F:protein serine/threonine kinase activity"/>
    <property type="evidence" value="ECO:0007669"/>
    <property type="project" value="Ensembl"/>
</dbReference>
<dbReference type="GO" id="GO:0044877">
    <property type="term" value="F:protein-containing complex binding"/>
    <property type="evidence" value="ECO:0007669"/>
    <property type="project" value="Ensembl"/>
</dbReference>
<dbReference type="GO" id="GO:0000978">
    <property type="term" value="F:RNA polymerase II cis-regulatory region sequence-specific DNA binding"/>
    <property type="evidence" value="ECO:0000250"/>
    <property type="project" value="UniProtKB"/>
</dbReference>
<dbReference type="GO" id="GO:0003697">
    <property type="term" value="F:single-stranded DNA binding"/>
    <property type="evidence" value="ECO:0007669"/>
    <property type="project" value="Ensembl"/>
</dbReference>
<dbReference type="GO" id="GO:0097100">
    <property type="term" value="F:supercoiled DNA binding"/>
    <property type="evidence" value="ECO:0007669"/>
    <property type="project" value="Ensembl"/>
</dbReference>
<dbReference type="GO" id="GO:0031100">
    <property type="term" value="P:animal organ regeneration"/>
    <property type="evidence" value="ECO:0007669"/>
    <property type="project" value="Ensembl"/>
</dbReference>
<dbReference type="GO" id="GO:0071373">
    <property type="term" value="P:cellular response to luteinizing hormone stimulus"/>
    <property type="evidence" value="ECO:0007669"/>
    <property type="project" value="Ensembl"/>
</dbReference>
<dbReference type="GO" id="GO:0006338">
    <property type="term" value="P:chromatin remodeling"/>
    <property type="evidence" value="ECO:0000250"/>
    <property type="project" value="UniProtKB"/>
</dbReference>
<dbReference type="GO" id="GO:0032922">
    <property type="term" value="P:circadian regulation of gene expression"/>
    <property type="evidence" value="ECO:0000250"/>
    <property type="project" value="UniProtKB"/>
</dbReference>
<dbReference type="GO" id="GO:0006260">
    <property type="term" value="P:DNA replication"/>
    <property type="evidence" value="ECO:0000315"/>
    <property type="project" value="MGI"/>
</dbReference>
<dbReference type="GO" id="GO:0006265">
    <property type="term" value="P:DNA topological change"/>
    <property type="evidence" value="ECO:0000314"/>
    <property type="project" value="MGI"/>
</dbReference>
<dbReference type="GO" id="GO:0040016">
    <property type="term" value="P:embryonic cleavage"/>
    <property type="evidence" value="ECO:0000315"/>
    <property type="project" value="MGI"/>
</dbReference>
<dbReference type="GO" id="GO:0051591">
    <property type="term" value="P:response to cAMP"/>
    <property type="evidence" value="ECO:0007669"/>
    <property type="project" value="Ensembl"/>
</dbReference>
<dbReference type="GO" id="GO:0010332">
    <property type="term" value="P:response to gamma radiation"/>
    <property type="evidence" value="ECO:0007669"/>
    <property type="project" value="Ensembl"/>
</dbReference>
<dbReference type="GO" id="GO:0009266">
    <property type="term" value="P:response to temperature stimulus"/>
    <property type="evidence" value="ECO:0007669"/>
    <property type="project" value="Ensembl"/>
</dbReference>
<dbReference type="GO" id="GO:0009410">
    <property type="term" value="P:response to xenobiotic stimulus"/>
    <property type="evidence" value="ECO:0007669"/>
    <property type="project" value="Ensembl"/>
</dbReference>
<dbReference type="GO" id="GO:0009303">
    <property type="term" value="P:rRNA transcription"/>
    <property type="evidence" value="ECO:0007669"/>
    <property type="project" value="Ensembl"/>
</dbReference>
<dbReference type="CDD" id="cd00659">
    <property type="entry name" value="Topo_IB_C"/>
    <property type="match status" value="1"/>
</dbReference>
<dbReference type="CDD" id="cd03488">
    <property type="entry name" value="Topoisomer_IB_N_htopoI_like"/>
    <property type="match status" value="1"/>
</dbReference>
<dbReference type="FunFam" id="1.10.10.41:FF:000001">
    <property type="entry name" value="DNA topoisomerase I"/>
    <property type="match status" value="1"/>
</dbReference>
<dbReference type="FunFam" id="1.10.132.10:FF:000001">
    <property type="entry name" value="DNA topoisomerase I"/>
    <property type="match status" value="1"/>
</dbReference>
<dbReference type="FunFam" id="2.170.11.10:FF:000002">
    <property type="entry name" value="DNA topoisomerase I"/>
    <property type="match status" value="1"/>
</dbReference>
<dbReference type="FunFam" id="3.90.15.10:FF:000001">
    <property type="entry name" value="DNA topoisomerase I"/>
    <property type="match status" value="1"/>
</dbReference>
<dbReference type="Gene3D" id="1.10.132.10">
    <property type="match status" value="1"/>
</dbReference>
<dbReference type="Gene3D" id="2.170.11.10">
    <property type="entry name" value="DNA Topoisomerase I, domain 2"/>
    <property type="match status" value="1"/>
</dbReference>
<dbReference type="Gene3D" id="3.90.15.10">
    <property type="entry name" value="Topoisomerase I, Chain A, domain 3"/>
    <property type="match status" value="1"/>
</dbReference>
<dbReference type="Gene3D" id="1.10.10.41">
    <property type="entry name" value="Yeast DNA topoisomerase - domain 1"/>
    <property type="match status" value="1"/>
</dbReference>
<dbReference type="InterPro" id="IPR011010">
    <property type="entry name" value="DNA_brk_join_enz"/>
</dbReference>
<dbReference type="InterPro" id="IPR013034">
    <property type="entry name" value="DNA_topo_DNA_db_N_dom1"/>
</dbReference>
<dbReference type="InterPro" id="IPR013030">
    <property type="entry name" value="DNA_topo_DNA_db_N_dom2"/>
</dbReference>
<dbReference type="InterPro" id="IPR001631">
    <property type="entry name" value="TopoI"/>
</dbReference>
<dbReference type="InterPro" id="IPR025834">
    <property type="entry name" value="TopoI_C_dom"/>
</dbReference>
<dbReference type="InterPro" id="IPR014711">
    <property type="entry name" value="TopoI_cat_a-hlx-sub_euk"/>
</dbReference>
<dbReference type="InterPro" id="IPR014727">
    <property type="entry name" value="TopoI_cat_a/b-sub_euk"/>
</dbReference>
<dbReference type="InterPro" id="IPR013500">
    <property type="entry name" value="TopoI_cat_euk"/>
</dbReference>
<dbReference type="InterPro" id="IPR008336">
    <property type="entry name" value="TopoI_DNA-bd_euk"/>
</dbReference>
<dbReference type="InterPro" id="IPR036202">
    <property type="entry name" value="TopoI_DNA-bd_euk_N_sf"/>
</dbReference>
<dbReference type="InterPro" id="IPR013499">
    <property type="entry name" value="TopoI_euk"/>
</dbReference>
<dbReference type="InterPro" id="IPR018521">
    <property type="entry name" value="TopoIB_AS"/>
</dbReference>
<dbReference type="InterPro" id="IPR048045">
    <property type="entry name" value="Topoisomer_I_DNA-bd"/>
</dbReference>
<dbReference type="InterPro" id="IPR051062">
    <property type="entry name" value="Topoisomerase_IB"/>
</dbReference>
<dbReference type="PANTHER" id="PTHR10290:SF5">
    <property type="entry name" value="DNA TOPOISOMERASE 1"/>
    <property type="match status" value="1"/>
</dbReference>
<dbReference type="PANTHER" id="PTHR10290">
    <property type="entry name" value="DNA TOPOISOMERASE I"/>
    <property type="match status" value="1"/>
</dbReference>
<dbReference type="Pfam" id="PF14370">
    <property type="entry name" value="Topo_C_assoc"/>
    <property type="match status" value="1"/>
</dbReference>
<dbReference type="Pfam" id="PF01028">
    <property type="entry name" value="Topoisom_I"/>
    <property type="match status" value="1"/>
</dbReference>
<dbReference type="Pfam" id="PF02919">
    <property type="entry name" value="Topoisom_I_N"/>
    <property type="match status" value="1"/>
</dbReference>
<dbReference type="PRINTS" id="PR00416">
    <property type="entry name" value="EUTPISMRASEI"/>
</dbReference>
<dbReference type="SMART" id="SM00435">
    <property type="entry name" value="TOPEUc"/>
    <property type="match status" value="1"/>
</dbReference>
<dbReference type="SUPFAM" id="SSF56349">
    <property type="entry name" value="DNA breaking-rejoining enzymes"/>
    <property type="match status" value="1"/>
</dbReference>
<dbReference type="SUPFAM" id="SSF46596">
    <property type="entry name" value="Eukaryotic DNA topoisomerase I, dispensable insert domain"/>
    <property type="match status" value="1"/>
</dbReference>
<dbReference type="SUPFAM" id="SSF56741">
    <property type="entry name" value="Eukaryotic DNA topoisomerase I, N-terminal DNA-binding fragment"/>
    <property type="match status" value="1"/>
</dbReference>
<dbReference type="PROSITE" id="PS00176">
    <property type="entry name" value="TOPO_IB_1"/>
    <property type="match status" value="1"/>
</dbReference>
<dbReference type="PROSITE" id="PS52038">
    <property type="entry name" value="TOPO_IB_2"/>
    <property type="match status" value="1"/>
</dbReference>
<comment type="function">
    <text evidence="2">Releases the supercoiling and torsional tension of DNA introduced during the DNA replication and transcription by transiently cleaving and rejoining one strand of the DNA duplex. Introduces a single-strand break via transesterification at a target site in duplex DNA. The scissile phosphodiester is attacked by the catalytic tyrosine of the enzyme, resulting in the formation of a DNA-(3'-phosphotyrosyl)-enzyme intermediate and the expulsion of a 5'-OH DNA strand. The free DNA strand then rotates around the intact phosphodiester bond on the opposing strand, thus removing DNA supercoils. Finally, in the religation step, the DNA 5'-OH attacks the covalent intermediate to expel the active-site tyrosine and restore the DNA phosphodiester backbone. Regulates the alternative splicing of tissue factor (F3) pre-mRNA in endothelial cells. Involved in the circadian transcription of the core circadian clock component BMAL1 by altering the chromatin structure around the ROR response elements (ROREs) on the BMAL1 promoter.</text>
</comment>
<comment type="catalytic activity">
    <reaction evidence="4">
        <text>ATP-independent breakage of single-stranded DNA, followed by passage and rejoining.</text>
        <dbReference type="EC" id="5.6.2.1"/>
    </reaction>
</comment>
<comment type="subunit">
    <text evidence="2">Monomer. Interacts with ERCC6. Interacts with TPRN; TPRN interacts with a number of DNA damage response proteins, is recruited to sites of DNA damage and may play a role in DNA damage repair.</text>
</comment>
<comment type="subcellular location">
    <subcellularLocation>
        <location evidence="2">Nucleus</location>
        <location evidence="2">Nucleolus</location>
    </subcellularLocation>
    <subcellularLocation>
        <location evidence="2">Nucleus</location>
        <location evidence="2">Nucleoplasm</location>
    </subcellularLocation>
    <text evidence="2">Diffuse nuclear localization with some enrichment in nucleoli. On CPT treatment, cleared from nucleoli into nucleoplasm. Sumoylated forms found in both nucleoplasm and nucleoli.</text>
</comment>
<comment type="PTM">
    <text evidence="2">Sumoylated. Lys-119 is the main site of sumoylation. Sumoylation plays a role in partitioning TOP1 between nucleoli and nucleoplasm. Levels are dramatically increased on camptothecin (CPT) treatment.</text>
</comment>
<comment type="PTM">
    <text evidence="2">Phosphorylation at Ser-508 by CK2 increases binding to supercoiled DNA and sensitivity to camptothecin.</text>
</comment>
<comment type="miscellaneous">
    <text>Eukaryotic topoisomerase I and II can relax both negative and positive supercoils, whereas prokaryotic enzymes relax only negative supercoils.</text>
</comment>
<comment type="similarity">
    <text evidence="6">Belongs to the type IB topoisomerase family.</text>
</comment>
<proteinExistence type="evidence at protein level"/>
<accession>Q04750</accession>
<accession>A2A4B7</accession>
<name>TOP1_MOUSE</name>
<gene>
    <name type="primary">Top1</name>
    <name type="synonym">Top-1</name>
</gene>
<feature type="initiator methionine" description="Removed" evidence="2">
    <location>
        <position position="1"/>
    </location>
</feature>
<feature type="chain" id="PRO_0000145202" description="DNA topoisomerase 1">
    <location>
        <begin position="2"/>
        <end position="767"/>
    </location>
</feature>
<feature type="domain" description="Topo IB-type catalytic" evidence="3">
    <location>
        <begin position="434"/>
        <end position="767"/>
    </location>
</feature>
<feature type="region of interest" description="Disordered" evidence="5">
    <location>
        <begin position="1"/>
        <end position="201"/>
    </location>
</feature>
<feature type="region of interest" description="Interaction with DNA" evidence="1">
    <location>
        <begin position="427"/>
        <end position="428"/>
    </location>
</feature>
<feature type="region of interest" description="Interaction with DNA" evidence="1">
    <location>
        <begin position="490"/>
        <end position="495"/>
    </location>
</feature>
<feature type="region of interest" description="Interaction with DNA" evidence="1">
    <location>
        <begin position="587"/>
        <end position="589"/>
    </location>
</feature>
<feature type="compositionally biased region" description="Basic and acidic residues" evidence="5">
    <location>
        <begin position="1"/>
        <end position="23"/>
    </location>
</feature>
<feature type="compositionally biased region" description="Basic residues" evidence="5">
    <location>
        <begin position="24"/>
        <end position="39"/>
    </location>
</feature>
<feature type="compositionally biased region" description="Basic and acidic residues" evidence="5">
    <location>
        <begin position="40"/>
        <end position="110"/>
    </location>
</feature>
<feature type="compositionally biased region" description="Basic and acidic residues" evidence="5">
    <location>
        <begin position="131"/>
        <end position="168"/>
    </location>
</feature>
<feature type="compositionally biased region" description="Basic and acidic residues" evidence="5">
    <location>
        <begin position="181"/>
        <end position="201"/>
    </location>
</feature>
<feature type="active site" description="O-(3'-phospho-DNA)-tyrosine intermediate" evidence="3 4">
    <location>
        <position position="725"/>
    </location>
</feature>
<feature type="site" description="Interaction with DNA" evidence="1">
    <location>
        <position position="318"/>
    </location>
</feature>
<feature type="site" description="Interaction with DNA" evidence="1">
    <location>
        <position position="366"/>
    </location>
</feature>
<feature type="site" description="Interaction with DNA" evidence="1">
    <location>
        <position position="414"/>
    </location>
</feature>
<feature type="site" description="Interaction with DNA" evidence="1">
    <location>
        <position position="445"/>
    </location>
</feature>
<feature type="site" description="Interaction with DNA" evidence="1">
    <location>
        <position position="503"/>
    </location>
</feature>
<feature type="site" description="Interaction with DNA" evidence="1">
    <location>
        <position position="534"/>
    </location>
</feature>
<feature type="site" description="Interaction with DNA" evidence="1">
    <location>
        <position position="576"/>
    </location>
</feature>
<feature type="site" description="Interaction with DNA" evidence="1">
    <location>
        <position position="634"/>
    </location>
</feature>
<feature type="site" description="Interaction with DNA" evidence="1">
    <location>
        <position position="652"/>
    </location>
</feature>
<feature type="modified residue" description="N-acetylserine" evidence="2">
    <location>
        <position position="2"/>
    </location>
</feature>
<feature type="modified residue" description="Phosphoserine" evidence="2">
    <location>
        <position position="2"/>
    </location>
</feature>
<feature type="modified residue" description="Phosphoserine" evidence="2">
    <location>
        <position position="10"/>
    </location>
</feature>
<feature type="modified residue" description="Phosphoserine" evidence="2">
    <location>
        <position position="59"/>
    </location>
</feature>
<feature type="modified residue" description="Phosphoserine" evidence="2">
    <location>
        <position position="114"/>
    </location>
</feature>
<feature type="modified residue" description="N6-acetyllysine; alternate" evidence="7">
    <location>
        <position position="174"/>
    </location>
</feature>
<feature type="modified residue" description="N6-acetyllysine" evidence="2">
    <location>
        <position position="282"/>
    </location>
</feature>
<feature type="modified residue" description="Phosphoserine; by CK2" evidence="2">
    <location>
        <position position="508"/>
    </location>
</feature>
<feature type="cross-link" description="Glycyl lysine isopeptide (Lys-Gly) (interchain with G-Cter in SUMO2)" evidence="2">
    <location>
        <position position="103"/>
    </location>
</feature>
<feature type="cross-link" description="Glycyl lysine isopeptide (Lys-Gly) (interchain with G-Cter in SUMO); alternate" evidence="6">
    <location>
        <position position="105"/>
    </location>
</feature>
<feature type="cross-link" description="Glycyl lysine isopeptide (Lys-Gly) (interchain with G-Cter in SUMO2); alternate" evidence="2">
    <location>
        <position position="105"/>
    </location>
</feature>
<feature type="cross-link" description="Glycyl lysine isopeptide (Lys-Gly) (interchain with G-Cter in SUMO); alternate" evidence="1">
    <location>
        <position position="119"/>
    </location>
</feature>
<feature type="cross-link" description="Glycyl lysine isopeptide (Lys-Gly) (interchain with G-Cter in SUMO1); alternate" evidence="2">
    <location>
        <position position="119"/>
    </location>
</feature>
<feature type="cross-link" description="Glycyl lysine isopeptide (Lys-Gly) (interchain with G-Cter in SUMO2); alternate" evidence="2">
    <location>
        <position position="119"/>
    </location>
</feature>
<feature type="cross-link" description="Glycyl lysine isopeptide (Lys-Gly) (interchain with G-Cter in SUMO2)" evidence="2">
    <location>
        <position position="136"/>
    </location>
</feature>
<feature type="cross-link" description="Glycyl lysine isopeptide (Lys-Gly) (interchain with G-Cter in SUMO2)" evidence="2">
    <location>
        <position position="150"/>
    </location>
</feature>
<feature type="cross-link" description="Glycyl lysine isopeptide (Lys-Gly) (interchain with G-Cter in SUMO); alternate" evidence="6">
    <location>
        <position position="155"/>
    </location>
</feature>
<feature type="cross-link" description="Glycyl lysine isopeptide (Lys-Gly) (interchain with G-Cter in SUMO2); alternate" evidence="2">
    <location>
        <position position="155"/>
    </location>
</feature>
<feature type="cross-link" description="Glycyl lysine isopeptide (Lys-Gly) (interchain with G-Cter in SUMO2)" evidence="2">
    <location>
        <position position="160"/>
    </location>
</feature>
<feature type="cross-link" description="Glycyl lysine isopeptide (Lys-Gly) (interchain with G-Cter in SUMO2)" evidence="2">
    <location>
        <position position="166"/>
    </location>
</feature>
<feature type="cross-link" description="Glycyl lysine isopeptide (Lys-Gly) (interchain with G-Cter in SUMO2); alternate" evidence="2">
    <location>
        <position position="174"/>
    </location>
</feature>
<feature type="cross-link" description="Glycyl lysine isopeptide (Lys-Gly) (interchain with G-Cter in SUMO2)" evidence="2">
    <location>
        <position position="206"/>
    </location>
</feature>
<feature type="cross-link" description="Glycyl lysine isopeptide (Lys-Gly) (interchain with G-Cter in SUMO2)" evidence="2">
    <location>
        <position position="338"/>
    </location>
</feature>
<feature type="cross-link" description="Glycyl lysine isopeptide (Lys-Gly) (interchain with G-Cter in SUMO2)" evidence="2">
    <location>
        <position position="551"/>
    </location>
</feature>
<feature type="cross-link" description="Glycyl lysine isopeptide (Lys-Gly) (interchain with G-Cter in SUMO2)" evidence="2">
    <location>
        <position position="644"/>
    </location>
</feature>
<feature type="cross-link" description="Glycyl lysine isopeptide (Lys-Gly) (interchain with G-Cter in SUMO2)" evidence="2">
    <location>
        <position position="702"/>
    </location>
</feature>
<feature type="cross-link" description="Glycyl lysine isopeptide (Lys-Gly) (interchain with G-Cter in SUMO2)" evidence="2">
    <location>
        <position position="714"/>
    </location>
</feature>
<feature type="sequence conflict" description="In Ref. 2; AAA40466." evidence="6" ref="2">
    <original>R</original>
    <variation>P</variation>
    <location>
        <position position="91"/>
    </location>
</feature>
<feature type="sequence conflict" description="In Ref. 1; BAA00950." evidence="6" ref="1">
    <original>E</original>
    <variation>D</variation>
    <location>
        <position position="121"/>
    </location>
</feature>
<feature type="sequence conflict" description="In Ref. 2; AAA40466." evidence="6" ref="2">
    <original>A</original>
    <variation>V</variation>
    <location>
        <position position="129"/>
    </location>
</feature>
<feature type="sequence conflict" description="In Ref. 2; AAA40466." evidence="6" ref="2">
    <location>
        <position position="161"/>
    </location>
</feature>
<feature type="sequence conflict" description="In Ref. 2; AAA40466." evidence="6" ref="2">
    <original>S</original>
    <variation>L</variation>
    <location>
        <position position="167"/>
    </location>
</feature>
<feature type="sequence conflict" description="In Ref. 2; AAA40466." evidence="6" ref="2">
    <original>R</original>
    <variation>W</variation>
    <location>
        <position position="277"/>
    </location>
</feature>
<feature type="sequence conflict" description="In Ref. 1; BAA00950." evidence="6" ref="1">
    <original>E</original>
    <variation>G</variation>
    <location>
        <position position="292"/>
    </location>
</feature>
<feature type="sequence conflict" description="In Ref. 2; AAA40466." evidence="6" ref="2">
    <original>G</original>
    <variation>V</variation>
    <location>
        <position position="522"/>
    </location>
</feature>
<feature type="sequence conflict" description="In Ref. 2; AAA40466." evidence="6" ref="2">
    <original>G</original>
    <variation>W</variation>
    <location>
        <position position="533"/>
    </location>
</feature>
<feature type="sequence conflict" description="In Ref. 2; AAA40466." evidence="6" ref="2">
    <original>D</original>
    <variation>Y</variation>
    <location>
        <position position="762"/>
    </location>
</feature>
<sequence length="767" mass="90876">MSGDHLHNDSQIEADFRLNDSHKHKDKHKDREHRHKEHKKDKDKDREKSKHSNSEHKDSEKKHKEKEKTKHKDGSSEKHKDKHKDRDKERRKEEKIRAAGDAKIKKEKENGFSSPPRIKDEPEDDGYFAPPKEDIKPLKRLRDEDDADYKPKKIKTEDIKKEKKRKSEEEEDGKLKKPKNKDKDKKVAEPDNKKKKPKKEEEQKWKWWEEERYPEGIKWKFLEHKGPVFAPPYEPLPESVKFYYDGKVMKLSPKAEEVATFFAKMLDHEYTTKEIFRKNFFKDWRKEMTNDEKNTITNLSKCDFTQMSQYFKAQSEARKQMSKEEKLKIKEENEKLLKEYGFCVMDNHRERIANFKIEPPGLFRGRGNHPKMGMLKRRIMPEDIIINCSKDAKVPSPPPGHKWKEVRHDNKVTWLVSWTENIQGSIKYIMLNPSSRIKGEKDWQKYETARRLKKCVDKIRNQYREDWKSKEMKVRQRAVALYFIDKLALRAGNEKEEGETADTVGCCSLRVEHINLHPELDGQEYVVEFDFPGKDSIRYYNKVPVEKRVFKNLQLFMENKQPEDDLFDRLNTGILNKHLQDLMEGLTAKVFRTYNASITLQQQLKELTAPDENVPAKILSYNRANRAVAILCNHQRAPPKTFEKSMMNLQSKIDAKKDQLADARRDLKSAKADAKVMKDAKTKKVVESKKKAVQRLEEQLMKLEVQATDREENKQIALGTSKLNYLDPRITVAWCKKWGVPIEKIYNKTQREKFAWAIDMTDEDYEF</sequence>
<organism>
    <name type="scientific">Mus musculus</name>
    <name type="common">Mouse</name>
    <dbReference type="NCBI Taxonomy" id="10090"/>
    <lineage>
        <taxon>Eukaryota</taxon>
        <taxon>Metazoa</taxon>
        <taxon>Chordata</taxon>
        <taxon>Craniata</taxon>
        <taxon>Vertebrata</taxon>
        <taxon>Euteleostomi</taxon>
        <taxon>Mammalia</taxon>
        <taxon>Eutheria</taxon>
        <taxon>Euarchontoglires</taxon>
        <taxon>Glires</taxon>
        <taxon>Rodentia</taxon>
        <taxon>Myomorpha</taxon>
        <taxon>Muroidea</taxon>
        <taxon>Muridae</taxon>
        <taxon>Murinae</taxon>
        <taxon>Mus</taxon>
        <taxon>Mus</taxon>
    </lineage>
</organism>
<evidence type="ECO:0000250" key="1"/>
<evidence type="ECO:0000250" key="2">
    <source>
        <dbReference type="UniProtKB" id="P11387"/>
    </source>
</evidence>
<evidence type="ECO:0000255" key="3">
    <source>
        <dbReference type="PROSITE-ProRule" id="PRU01382"/>
    </source>
</evidence>
<evidence type="ECO:0000255" key="4">
    <source>
        <dbReference type="PROSITE-ProRule" id="PRU10130"/>
    </source>
</evidence>
<evidence type="ECO:0000256" key="5">
    <source>
        <dbReference type="SAM" id="MobiDB-lite"/>
    </source>
</evidence>
<evidence type="ECO:0000305" key="6"/>
<evidence type="ECO:0007744" key="7">
    <source>
    </source>
</evidence>
<protein>
    <recommendedName>
        <fullName>DNA topoisomerase 1</fullName>
        <ecNumber evidence="4">5.6.2.1</ecNumber>
    </recommendedName>
    <alternativeName>
        <fullName>DNA topoisomerase I</fullName>
    </alternativeName>
</protein>
<keyword id="KW-0007">Acetylation</keyword>
<keyword id="KW-0090">Biological rhythms</keyword>
<keyword id="KW-0903">Direct protein sequencing</keyword>
<keyword id="KW-0238">DNA-binding</keyword>
<keyword id="KW-0413">Isomerase</keyword>
<keyword id="KW-1017">Isopeptide bond</keyword>
<keyword id="KW-0539">Nucleus</keyword>
<keyword id="KW-0597">Phosphoprotein</keyword>
<keyword id="KW-1185">Reference proteome</keyword>
<keyword id="KW-0799">Topoisomerase</keyword>
<keyword id="KW-0832">Ubl conjugation</keyword>